<keyword id="KW-1283">Bacterial microcompartment</keyword>
<keyword id="KW-0120">Carbon dioxide fixation</keyword>
<keyword id="KW-1282">Carboxysome</keyword>
<keyword id="KW-0602">Photosynthesis</keyword>
<keyword id="KW-1185">Reference proteome</keyword>
<organism>
    <name type="scientific">Synechocystis sp. (strain ATCC 27184 / PCC 6803 / Kazusa)</name>
    <dbReference type="NCBI Taxonomy" id="1111708"/>
    <lineage>
        <taxon>Bacteria</taxon>
        <taxon>Bacillati</taxon>
        <taxon>Cyanobacteriota</taxon>
        <taxon>Cyanophyceae</taxon>
        <taxon>Synechococcales</taxon>
        <taxon>Merismopediaceae</taxon>
        <taxon>Synechocystis</taxon>
    </lineage>
</organism>
<evidence type="ECO:0000250" key="1">
    <source>
        <dbReference type="UniProtKB" id="P46204"/>
    </source>
</evidence>
<evidence type="ECO:0000256" key="2">
    <source>
        <dbReference type="SAM" id="MobiDB-lite"/>
    </source>
</evidence>
<evidence type="ECO:0000269" key="3">
    <source>
    </source>
</evidence>
<evidence type="ECO:0000303" key="4">
    <source>
    </source>
</evidence>
<evidence type="ECO:0000305" key="5"/>
<evidence type="ECO:0000305" key="6">
    <source>
    </source>
</evidence>
<reference key="1">
    <citation type="journal article" date="1996" name="DNA Res.">
        <title>Sequence analysis of the genome of the unicellular cyanobacterium Synechocystis sp. strain PCC6803. II. Sequence determination of the entire genome and assignment of potential protein-coding regions.</title>
        <authorList>
            <person name="Kaneko T."/>
            <person name="Sato S."/>
            <person name="Kotani H."/>
            <person name="Tanaka A."/>
            <person name="Asamizu E."/>
            <person name="Nakamura Y."/>
            <person name="Miyajima N."/>
            <person name="Hirosawa M."/>
            <person name="Sugiura M."/>
            <person name="Sasamoto S."/>
            <person name="Kimura T."/>
            <person name="Hosouchi T."/>
            <person name="Matsuno A."/>
            <person name="Muraki A."/>
            <person name="Nakazaki N."/>
            <person name="Naruo K."/>
            <person name="Okumura S."/>
            <person name="Shimpo S."/>
            <person name="Takeuchi C."/>
            <person name="Wada T."/>
            <person name="Watanabe A."/>
            <person name="Yamada M."/>
            <person name="Yasuda M."/>
            <person name="Tabata S."/>
        </authorList>
    </citation>
    <scope>NUCLEOTIDE SEQUENCE [LARGE SCALE GENOMIC DNA]</scope>
    <source>
        <strain>ATCC 27184 / PCC 6803 / Kazusa</strain>
    </source>
</reference>
<reference key="2">
    <citation type="journal article" date="2008" name="J. Bacteriol.">
        <title>A multiprotein bicarbonate dehydration complex essential to carboxysome function in cyanobacteria.</title>
        <authorList>
            <person name="Cot S.S."/>
            <person name="So A.K."/>
            <person name="Espie G.S."/>
        </authorList>
    </citation>
    <scope>INTERACTION WITH CCMM</scope>
    <source>
        <strain>ATCC 27184 / PCC 6803 / Kazusa</strain>
    </source>
</reference>
<dbReference type="EMBL" id="BA000022">
    <property type="protein sequence ID" value="BAA16772.1"/>
    <property type="molecule type" value="Genomic_DNA"/>
</dbReference>
<dbReference type="PIR" id="S74620">
    <property type="entry name" value="S74620"/>
</dbReference>
<dbReference type="SMR" id="P72757"/>
<dbReference type="IntAct" id="P72757">
    <property type="interactions" value="10"/>
</dbReference>
<dbReference type="STRING" id="1148.gene:10497628"/>
<dbReference type="PaxDb" id="1148-1651845"/>
<dbReference type="EnsemblBacteria" id="BAA16772">
    <property type="protein sequence ID" value="BAA16772"/>
    <property type="gene ID" value="BAA16772"/>
</dbReference>
<dbReference type="KEGG" id="syn:sll1032"/>
<dbReference type="eggNOG" id="COG0663">
    <property type="taxonomic scope" value="Bacteria"/>
</dbReference>
<dbReference type="InParanoid" id="P72757"/>
<dbReference type="PhylomeDB" id="P72757"/>
<dbReference type="Proteomes" id="UP000001425">
    <property type="component" value="Chromosome"/>
</dbReference>
<dbReference type="GO" id="GO:0031470">
    <property type="term" value="C:carboxysome"/>
    <property type="evidence" value="ECO:0007669"/>
    <property type="project" value="UniProtKB-SubCell"/>
</dbReference>
<dbReference type="GO" id="GO:0043886">
    <property type="term" value="F:structural constituent of carboxysome shell"/>
    <property type="evidence" value="ECO:0007669"/>
    <property type="project" value="UniProtKB-ARBA"/>
</dbReference>
<dbReference type="GO" id="GO:0015977">
    <property type="term" value="P:carbon fixation"/>
    <property type="evidence" value="ECO:0007669"/>
    <property type="project" value="UniProtKB-KW"/>
</dbReference>
<dbReference type="GO" id="GO:0015979">
    <property type="term" value="P:photosynthesis"/>
    <property type="evidence" value="ECO:0007669"/>
    <property type="project" value="UniProtKB-KW"/>
</dbReference>
<dbReference type="Gene3D" id="2.160.10.10">
    <property type="entry name" value="Hexapeptide repeat proteins"/>
    <property type="match status" value="1"/>
</dbReference>
<dbReference type="InterPro" id="IPR011004">
    <property type="entry name" value="Trimer_LpxA-like_sf"/>
</dbReference>
<dbReference type="SUPFAM" id="SSF51161">
    <property type="entry name" value="Trimeric LpxA-like enzymes"/>
    <property type="match status" value="1"/>
</dbReference>
<name>CCMN_SYNY3</name>
<proteinExistence type="evidence at protein level"/>
<comment type="function">
    <text evidence="1 3">Required for carboxysome formation; the N-terminus interacts with CcmM which itself binds RuBisCO (ribulose bisphosphate carboxylase, rbcL-rbcS) (PubMed:17993516). May also contact shell protein CcmK to help assemble the carboxysome (By similarity).</text>
</comment>
<comment type="function">
    <text evidence="1">Beta-carboxysome assembly initiates when soluble RuBisCO is condensed into a liquid matrix in a pre-carboxysome by the RbcS-like domains of probably both forms of CcmM. CcmN interacts with the N-terminus of full-length CcmM, and then recruits the CcmK major shell protein via CcmN's encapsulation peptide. Shell formation requires CcmK proteins and CcmO. CcmL caps the otherwise elongated carboxysome. Once fully encapsulated carboxysomes are formed, they migrate within the cell probably via interactions with the cytoskeleton.</text>
</comment>
<comment type="subunit">
    <text evidence="1 3">Interacts with full-length and the N-terminal 249 residues of CcmM; a probable CcmM-CcaA-CcmN complex can also be isolated (PubMed:17993516). Interacts with CcmK (By similarity).</text>
</comment>
<comment type="interaction">
    <interactant intactId="EBI-1609426">
        <id>P72757</id>
    </interactant>
    <interactant intactId="EBI-862848">
        <id>P72758</id>
        <label>ccmM</label>
    </interactant>
    <organismsDiffer>false</organismsDiffer>
    <experiments>3</experiments>
</comment>
<comment type="subcellular location">
    <subcellularLocation>
        <location evidence="6">Carboxysome</location>
    </subcellularLocation>
    <text evidence="6">This cyanobacterium makes beta-type carboxysomes.</text>
</comment>
<comment type="similarity">
    <text evidence="5">Belongs to the CcmN family.</text>
</comment>
<sequence>MQLPPVHSVSLSEYFVSGNVIIHETAVIAPGVILEAAPDCQITIEAGVCIGLGSVISAHAGDVKIQEQTAIAPGCLVIGPVTIGATACLGSRSTVFQQDIDAQVLIPPGSLLMNRVADVQTVGASSPTTDSVTEKKSPSTANPIAPIPSPWDNEPPAKGTDSPSDQAKESIARQSRPSTAEAAEQISSNRSPGESTPTAPTVVTTAPLVSEEVQEKPPVVGQVYINQLLLTLFPERRYFSS</sequence>
<feature type="chain" id="PRO_0000451245" description="Carboxysome assembly protein CcmN">
    <location>
        <begin position="1"/>
        <end position="241"/>
    </location>
</feature>
<feature type="region of interest" description="Disordered" evidence="2">
    <location>
        <begin position="123"/>
        <end position="206"/>
    </location>
</feature>
<feature type="short sequence motif" description="Encapsulation peptide" evidence="1">
    <location>
        <begin position="219"/>
        <end position="241"/>
    </location>
</feature>
<feature type="compositionally biased region" description="Polar residues" evidence="2">
    <location>
        <begin position="185"/>
        <end position="195"/>
    </location>
</feature>
<feature type="compositionally biased region" description="Low complexity" evidence="2">
    <location>
        <begin position="196"/>
        <end position="206"/>
    </location>
</feature>
<accession>P72757</accession>
<gene>
    <name evidence="4" type="primary">ccmN</name>
    <name type="ordered locus">sll1032</name>
</gene>
<protein>
    <recommendedName>
        <fullName evidence="5">Carboxysome assembly protein CcmN</fullName>
    </recommendedName>
    <alternativeName>
        <fullName>Carbon dioxide concentrating mechanism protein CcmN</fullName>
    </alternativeName>
</protein>